<name>GCST_CUPPJ</name>
<sequence>MTLQATPLNAIHRALGARMVDFGGWDMPVNYGSQIEEHNAVRSDAGMFDVSHMCVVDLNGANTRAFLRGLLANNVDKLQTPGKALYSCMLDEKGGVIDDLIVYFFAEDRFRLVVNASTALGDIEWIRARNDATGSGVTITPRRGDVAPAGALPLAIVAVQGPNARTKVWNTFPSTQPSDALKPFNAVVVHDPAIGEIMVARTGYTGEDGFELVVPAENVAAVWEKLDAAGVRPAGLGARDTLRLEAGMNLYGQDMDINTSPLDAGLAWTVDLQSERDFTGKAALAAAGQRQQFLGLILRDKGGVLRAHQKVVTAAGDGEITSGTFSPSLSQSIAFARLPMGVAVGDTVQVEIRDRKLAATVVKLPFVRNGKALVS</sequence>
<comment type="function">
    <text evidence="1">The glycine cleavage system catalyzes the degradation of glycine.</text>
</comment>
<comment type="catalytic activity">
    <reaction evidence="1">
        <text>N(6)-[(R)-S(8)-aminomethyldihydrolipoyl]-L-lysyl-[protein] + (6S)-5,6,7,8-tetrahydrofolate = N(6)-[(R)-dihydrolipoyl]-L-lysyl-[protein] + (6R)-5,10-methylene-5,6,7,8-tetrahydrofolate + NH4(+)</text>
        <dbReference type="Rhea" id="RHEA:16945"/>
        <dbReference type="Rhea" id="RHEA-COMP:10475"/>
        <dbReference type="Rhea" id="RHEA-COMP:10492"/>
        <dbReference type="ChEBI" id="CHEBI:15636"/>
        <dbReference type="ChEBI" id="CHEBI:28938"/>
        <dbReference type="ChEBI" id="CHEBI:57453"/>
        <dbReference type="ChEBI" id="CHEBI:83100"/>
        <dbReference type="ChEBI" id="CHEBI:83143"/>
        <dbReference type="EC" id="2.1.2.10"/>
    </reaction>
</comment>
<comment type="subunit">
    <text evidence="1">The glycine cleavage system is composed of four proteins: P, T, L and H.</text>
</comment>
<comment type="similarity">
    <text evidence="1">Belongs to the GcvT family.</text>
</comment>
<accession>Q46VZ7</accession>
<gene>
    <name evidence="1" type="primary">gcvT</name>
    <name type="ordered locus">Reut_A3329</name>
</gene>
<evidence type="ECO:0000255" key="1">
    <source>
        <dbReference type="HAMAP-Rule" id="MF_00259"/>
    </source>
</evidence>
<dbReference type="EC" id="2.1.2.10" evidence="1"/>
<dbReference type="EMBL" id="CP000090">
    <property type="protein sequence ID" value="AAZ62687.1"/>
    <property type="molecule type" value="Genomic_DNA"/>
</dbReference>
<dbReference type="SMR" id="Q46VZ7"/>
<dbReference type="STRING" id="264198.Reut_A3329"/>
<dbReference type="KEGG" id="reu:Reut_A3329"/>
<dbReference type="eggNOG" id="COG0404">
    <property type="taxonomic scope" value="Bacteria"/>
</dbReference>
<dbReference type="HOGENOM" id="CLU_007884_10_2_4"/>
<dbReference type="OrthoDB" id="9774591at2"/>
<dbReference type="GO" id="GO:0005829">
    <property type="term" value="C:cytosol"/>
    <property type="evidence" value="ECO:0007669"/>
    <property type="project" value="TreeGrafter"/>
</dbReference>
<dbReference type="GO" id="GO:0005960">
    <property type="term" value="C:glycine cleavage complex"/>
    <property type="evidence" value="ECO:0007669"/>
    <property type="project" value="InterPro"/>
</dbReference>
<dbReference type="GO" id="GO:0004047">
    <property type="term" value="F:aminomethyltransferase activity"/>
    <property type="evidence" value="ECO:0007669"/>
    <property type="project" value="UniProtKB-UniRule"/>
</dbReference>
<dbReference type="GO" id="GO:0008483">
    <property type="term" value="F:transaminase activity"/>
    <property type="evidence" value="ECO:0007669"/>
    <property type="project" value="UniProtKB-KW"/>
</dbReference>
<dbReference type="GO" id="GO:0019464">
    <property type="term" value="P:glycine decarboxylation via glycine cleavage system"/>
    <property type="evidence" value="ECO:0007669"/>
    <property type="project" value="UniProtKB-UniRule"/>
</dbReference>
<dbReference type="FunFam" id="3.30.70.1400:FF:000001">
    <property type="entry name" value="Aminomethyltransferase"/>
    <property type="match status" value="1"/>
</dbReference>
<dbReference type="FunFam" id="4.10.1250.10:FF:000001">
    <property type="entry name" value="Aminomethyltransferase"/>
    <property type="match status" value="1"/>
</dbReference>
<dbReference type="Gene3D" id="2.40.30.110">
    <property type="entry name" value="Aminomethyltransferase beta-barrel domains"/>
    <property type="match status" value="1"/>
</dbReference>
<dbReference type="Gene3D" id="3.30.70.1400">
    <property type="entry name" value="Aminomethyltransferase beta-barrel domains"/>
    <property type="match status" value="1"/>
</dbReference>
<dbReference type="Gene3D" id="4.10.1250.10">
    <property type="entry name" value="Aminomethyltransferase fragment"/>
    <property type="match status" value="1"/>
</dbReference>
<dbReference type="Gene3D" id="3.30.1360.120">
    <property type="entry name" value="Probable tRNA modification gtpase trme, domain 1"/>
    <property type="match status" value="1"/>
</dbReference>
<dbReference type="HAMAP" id="MF_00259">
    <property type="entry name" value="GcvT"/>
    <property type="match status" value="1"/>
</dbReference>
<dbReference type="InterPro" id="IPR006223">
    <property type="entry name" value="GCS_T"/>
</dbReference>
<dbReference type="InterPro" id="IPR022903">
    <property type="entry name" value="GCS_T_bac"/>
</dbReference>
<dbReference type="InterPro" id="IPR013977">
    <property type="entry name" value="GCST_C"/>
</dbReference>
<dbReference type="InterPro" id="IPR006222">
    <property type="entry name" value="GCV_T_N"/>
</dbReference>
<dbReference type="InterPro" id="IPR028896">
    <property type="entry name" value="GcvT/YgfZ/DmdA"/>
</dbReference>
<dbReference type="InterPro" id="IPR029043">
    <property type="entry name" value="GcvT/YgfZ_C"/>
</dbReference>
<dbReference type="InterPro" id="IPR027266">
    <property type="entry name" value="TrmE/GcvT_dom1"/>
</dbReference>
<dbReference type="NCBIfam" id="TIGR00528">
    <property type="entry name" value="gcvT"/>
    <property type="match status" value="1"/>
</dbReference>
<dbReference type="NCBIfam" id="NF001567">
    <property type="entry name" value="PRK00389.1"/>
    <property type="match status" value="1"/>
</dbReference>
<dbReference type="PANTHER" id="PTHR43757">
    <property type="entry name" value="AMINOMETHYLTRANSFERASE"/>
    <property type="match status" value="1"/>
</dbReference>
<dbReference type="PANTHER" id="PTHR43757:SF2">
    <property type="entry name" value="AMINOMETHYLTRANSFERASE, MITOCHONDRIAL"/>
    <property type="match status" value="1"/>
</dbReference>
<dbReference type="Pfam" id="PF01571">
    <property type="entry name" value="GCV_T"/>
    <property type="match status" value="1"/>
</dbReference>
<dbReference type="Pfam" id="PF08669">
    <property type="entry name" value="GCV_T_C"/>
    <property type="match status" value="1"/>
</dbReference>
<dbReference type="PIRSF" id="PIRSF006487">
    <property type="entry name" value="GcvT"/>
    <property type="match status" value="1"/>
</dbReference>
<dbReference type="SUPFAM" id="SSF101790">
    <property type="entry name" value="Aminomethyltransferase beta-barrel domain"/>
    <property type="match status" value="1"/>
</dbReference>
<dbReference type="SUPFAM" id="SSF103025">
    <property type="entry name" value="Folate-binding domain"/>
    <property type="match status" value="1"/>
</dbReference>
<proteinExistence type="inferred from homology"/>
<reference key="1">
    <citation type="journal article" date="2010" name="PLoS ONE">
        <title>The complete multipartite genome sequence of Cupriavidus necator JMP134, a versatile pollutant degrader.</title>
        <authorList>
            <person name="Lykidis A."/>
            <person name="Perez-Pantoja D."/>
            <person name="Ledger T."/>
            <person name="Mavromatis K."/>
            <person name="Anderson I.J."/>
            <person name="Ivanova N.N."/>
            <person name="Hooper S.D."/>
            <person name="Lapidus A."/>
            <person name="Lucas S."/>
            <person name="Gonzalez B."/>
            <person name="Kyrpides N.C."/>
        </authorList>
    </citation>
    <scope>NUCLEOTIDE SEQUENCE [LARGE SCALE GENOMIC DNA]</scope>
    <source>
        <strain>JMP134 / LMG 1197</strain>
    </source>
</reference>
<protein>
    <recommendedName>
        <fullName evidence="1">Aminomethyltransferase</fullName>
        <ecNumber evidence="1">2.1.2.10</ecNumber>
    </recommendedName>
    <alternativeName>
        <fullName evidence="1">Glycine cleavage system T protein</fullName>
    </alternativeName>
</protein>
<feature type="chain" id="PRO_1000114106" description="Aminomethyltransferase">
    <location>
        <begin position="1"/>
        <end position="375"/>
    </location>
</feature>
<organism>
    <name type="scientific">Cupriavidus pinatubonensis (strain JMP 134 / LMG 1197)</name>
    <name type="common">Cupriavidus necator (strain JMP 134)</name>
    <dbReference type="NCBI Taxonomy" id="264198"/>
    <lineage>
        <taxon>Bacteria</taxon>
        <taxon>Pseudomonadati</taxon>
        <taxon>Pseudomonadota</taxon>
        <taxon>Betaproteobacteria</taxon>
        <taxon>Burkholderiales</taxon>
        <taxon>Burkholderiaceae</taxon>
        <taxon>Cupriavidus</taxon>
    </lineage>
</organism>
<keyword id="KW-0032">Aminotransferase</keyword>
<keyword id="KW-0808">Transferase</keyword>